<name>FAPR_EXIS2</name>
<feature type="chain" id="PRO_1000187834" description="Transcription factor FapR">
    <location>
        <begin position="1"/>
        <end position="189"/>
    </location>
</feature>
<sequence>MRVPKKERQTELQHTIEQNPFITDEALATHFNVSIQTIRLDRMEMKIPELRERIKHVATERLDDVRTLTENEVIGDMIDLKLDTSAISILEILPEHAFSRNAIARGHILFAQANSLAIALIDDELALTTKANVQFTRSVHVGERVVAKAFVSSHRQDGRSDINVESFVGDECVFIGEFTVYRSSKEESK</sequence>
<comment type="function">
    <text evidence="1">Transcriptional factor involved in regulation of membrane lipid biosynthesis by repressing genes involved in fatty acid and phospholipid metabolism.</text>
</comment>
<comment type="similarity">
    <text evidence="1">Belongs to the FapR family.</text>
</comment>
<dbReference type="EMBL" id="CP001022">
    <property type="protein sequence ID" value="ACB61363.1"/>
    <property type="molecule type" value="Genomic_DNA"/>
</dbReference>
<dbReference type="RefSeq" id="WP_012370781.1">
    <property type="nucleotide sequence ID" value="NC_010556.1"/>
</dbReference>
<dbReference type="SMR" id="B1YIN7"/>
<dbReference type="STRING" id="262543.Exig_1911"/>
<dbReference type="KEGG" id="esi:Exig_1911"/>
<dbReference type="eggNOG" id="COG1349">
    <property type="taxonomic scope" value="Bacteria"/>
</dbReference>
<dbReference type="HOGENOM" id="CLU_095708_0_0_9"/>
<dbReference type="OrthoDB" id="1706183at2"/>
<dbReference type="Proteomes" id="UP000001681">
    <property type="component" value="Chromosome"/>
</dbReference>
<dbReference type="GO" id="GO:0003677">
    <property type="term" value="F:DNA binding"/>
    <property type="evidence" value="ECO:0007669"/>
    <property type="project" value="UniProtKB-KW"/>
</dbReference>
<dbReference type="GO" id="GO:0003700">
    <property type="term" value="F:DNA-binding transcription factor activity"/>
    <property type="evidence" value="ECO:0007669"/>
    <property type="project" value="UniProtKB-UniRule"/>
</dbReference>
<dbReference type="GO" id="GO:0006633">
    <property type="term" value="P:fatty acid biosynthetic process"/>
    <property type="evidence" value="ECO:0007669"/>
    <property type="project" value="UniProtKB-KW"/>
</dbReference>
<dbReference type="GO" id="GO:0045892">
    <property type="term" value="P:negative regulation of DNA-templated transcription"/>
    <property type="evidence" value="ECO:0007669"/>
    <property type="project" value="UniProtKB-UniRule"/>
</dbReference>
<dbReference type="GO" id="GO:0045717">
    <property type="term" value="P:negative regulation of fatty acid biosynthetic process"/>
    <property type="evidence" value="ECO:0007669"/>
    <property type="project" value="UniProtKB-UniRule"/>
</dbReference>
<dbReference type="Gene3D" id="3.10.129.10">
    <property type="entry name" value="Hotdog Thioesterase"/>
    <property type="match status" value="1"/>
</dbReference>
<dbReference type="Gene3D" id="1.10.10.10">
    <property type="entry name" value="Winged helix-like DNA-binding domain superfamily/Winged helix DNA-binding domain"/>
    <property type="match status" value="1"/>
</dbReference>
<dbReference type="HAMAP" id="MF_01814">
    <property type="entry name" value="Transcrip_fact_FapR"/>
    <property type="match status" value="1"/>
</dbReference>
<dbReference type="InterPro" id="IPR029069">
    <property type="entry name" value="HotDog_dom_sf"/>
</dbReference>
<dbReference type="InterPro" id="IPR017275">
    <property type="entry name" value="Transcription_factor_FapR"/>
</dbReference>
<dbReference type="InterPro" id="IPR036388">
    <property type="entry name" value="WH-like_DNA-bd_sf"/>
</dbReference>
<dbReference type="NCBIfam" id="NF003359">
    <property type="entry name" value="PRK04424.1"/>
    <property type="match status" value="1"/>
</dbReference>
<dbReference type="PIRSF" id="PIRSF037733">
    <property type="entry name" value="Transcription_factor_FapR"/>
    <property type="match status" value="1"/>
</dbReference>
<dbReference type="SUPFAM" id="SSF54637">
    <property type="entry name" value="Thioesterase/thiol ester dehydrase-isomerase"/>
    <property type="match status" value="1"/>
</dbReference>
<reference key="1">
    <citation type="submission" date="2008-04" db="EMBL/GenBank/DDBJ databases">
        <title>Complete sequence of chromosome of Exiguobacterium sibiricum 255-15.</title>
        <authorList>
            <consortium name="US DOE Joint Genome Institute"/>
            <person name="Copeland A."/>
            <person name="Lucas S."/>
            <person name="Lapidus A."/>
            <person name="Glavina del Rio T."/>
            <person name="Dalin E."/>
            <person name="Tice H."/>
            <person name="Bruce D."/>
            <person name="Goodwin L."/>
            <person name="Pitluck S."/>
            <person name="Kiss H."/>
            <person name="Chertkov O."/>
            <person name="Monk C."/>
            <person name="Brettin T."/>
            <person name="Detter J.C."/>
            <person name="Han C."/>
            <person name="Kuske C.R."/>
            <person name="Schmutz J."/>
            <person name="Larimer F."/>
            <person name="Land M."/>
            <person name="Hauser L."/>
            <person name="Kyrpides N."/>
            <person name="Mikhailova N."/>
            <person name="Vishnivetskaya T."/>
            <person name="Rodrigues D.F."/>
            <person name="Gilichinsky D."/>
            <person name="Tiedje J."/>
            <person name="Richardson P."/>
        </authorList>
    </citation>
    <scope>NUCLEOTIDE SEQUENCE [LARGE SCALE GENOMIC DNA]</scope>
    <source>
        <strain>DSM 17290 / CCUG 55495 / CIP 109462 / JCM 13490 / 255-15</strain>
    </source>
</reference>
<protein>
    <recommendedName>
        <fullName evidence="1">Transcription factor FapR</fullName>
    </recommendedName>
    <alternativeName>
        <fullName evidence="1">Fatty acid and phospholipid biosynthesis regulator</fullName>
    </alternativeName>
</protein>
<organism>
    <name type="scientific">Exiguobacterium sibiricum (strain DSM 17290 / CCUG 55495 / CIP 109462 / JCM 13490 / 255-15)</name>
    <dbReference type="NCBI Taxonomy" id="262543"/>
    <lineage>
        <taxon>Bacteria</taxon>
        <taxon>Bacillati</taxon>
        <taxon>Bacillota</taxon>
        <taxon>Bacilli</taxon>
        <taxon>Bacillales</taxon>
        <taxon>Bacillales Family XII. Incertae Sedis</taxon>
        <taxon>Exiguobacterium</taxon>
    </lineage>
</organism>
<accession>B1YIN7</accession>
<proteinExistence type="inferred from homology"/>
<evidence type="ECO:0000255" key="1">
    <source>
        <dbReference type="HAMAP-Rule" id="MF_01814"/>
    </source>
</evidence>
<keyword id="KW-0238">DNA-binding</keyword>
<keyword id="KW-0275">Fatty acid biosynthesis</keyword>
<keyword id="KW-0276">Fatty acid metabolism</keyword>
<keyword id="KW-0444">Lipid biosynthesis</keyword>
<keyword id="KW-0443">Lipid metabolism</keyword>
<keyword id="KW-1185">Reference proteome</keyword>
<keyword id="KW-0678">Repressor</keyword>
<keyword id="KW-0804">Transcription</keyword>
<keyword id="KW-0805">Transcription regulation</keyword>
<gene>
    <name evidence="1" type="primary">fapR</name>
    <name type="ordered locus">Exig_1911</name>
</gene>